<accession>Q9BH05</accession>
<sequence>MFHFNRCQHLKKITQKCFSSIHVKTDKHAQQFLSRTFALAELRKSWYSTHSLVGDKNIILMGPPGAGKTTVGRIIGQKLGCCVIDVDDDILEKTWNMSVSEKLQDVGNEQFLEEEGKAVLNFSASGSVISLTGSNPMHDASMWHLKKNGVIVYLDVPLLDLIHRLKLMKIDRIVGRNSGTSMKDLLKFRRQYYKKWYDARVFCESGASPEEVADKVLNAIKRYQDVDSETFISTRHVWPKDCEQKVSAKFFSEAVIEGLASDGGLFVPAKEFPKLSCGEWKSLVGATYIERAQILLERCIHPADIPAARLGEMIETAYGENFACSKIAPVRHLSGNQFILELFHGPTGSFKDLSLQLMPHIFAHCIPPSCNYMILVATSGDTGSAVLNGFSRLNKNDKQRIAVVTFFPENGVSDFQKAQIIGSQRENGWAVGVESDFDFCQTAIKRIFNDSDFTGFLTVEYGTILSSANSINWGRLLPQVVYHASAYLDLVSQGFISFGSPVDVCIPTGNFGNILAAVYAKMMGIPIRKFICASNQNRVLTDFIKTGHYDLRERKLAQTFSPSIDILKSSNLERHLHLMANKDGQLMTELFNQLESQHHFQIEKVLVEKLQQDFVADWCSEGECLAAINSTYNTSGYILDPHTAVAKVVADRVQDKTCPVIVSSTAHYSKFAPAIMQALKIKEINETSSSQLYLLGSYNALPPLHEALLERTKQQEKMEYQVCAADMNVLKSHVEKLIQNQFI</sequence>
<comment type="cofactor">
    <cofactor evidence="1">
        <name>pyridoxal 5'-phosphate</name>
        <dbReference type="ChEBI" id="CHEBI:597326"/>
    </cofactor>
</comment>
<comment type="similarity">
    <text evidence="3">Belongs to the threonine synthase family.</text>
</comment>
<feature type="chain" id="PRO_0000185647" description="Threonine synthase-like 1">
    <location>
        <begin position="1"/>
        <end position="743"/>
    </location>
</feature>
<feature type="modified residue" description="N6-acetyllysine" evidence="2">
    <location>
        <position position="281"/>
    </location>
</feature>
<feature type="modified residue" description="N6-(pyridoxal phosphate)lysine" evidence="1">
    <location>
        <position position="351"/>
    </location>
</feature>
<gene>
    <name type="primary">THNSL1</name>
    <name type="ORF">QflA-10072</name>
</gene>
<name>THNS1_MACFA</name>
<proteinExistence type="evidence at transcript level"/>
<reference key="1">
    <citation type="journal article" date="2002" name="Genome Biol.">
        <title>Prediction of unidentified human genes on the basis of sequence similarity to novel cDNAs from cynomolgus monkey brain.</title>
        <authorList>
            <person name="Osada N."/>
            <person name="Hida M."/>
            <person name="Kusuda J."/>
            <person name="Tanuma R."/>
            <person name="Hirata M."/>
            <person name="Hirai M."/>
            <person name="Terao K."/>
            <person name="Suzuki Y."/>
            <person name="Sugano S."/>
            <person name="Hashimoto K."/>
        </authorList>
    </citation>
    <scope>NUCLEOTIDE SEQUENCE [LARGE SCALE MRNA]</scope>
    <source>
        <tissue>Frontal cortex</tissue>
    </source>
</reference>
<dbReference type="EMBL" id="AB055251">
    <property type="protein sequence ID" value="BAB21875.1"/>
    <property type="molecule type" value="mRNA"/>
</dbReference>
<dbReference type="RefSeq" id="XP_045255633.1">
    <property type="nucleotide sequence ID" value="XM_045399698.2"/>
</dbReference>
<dbReference type="RefSeq" id="XP_045255635.1">
    <property type="nucleotide sequence ID" value="XM_045399700.2"/>
</dbReference>
<dbReference type="RefSeq" id="XP_045255636.1">
    <property type="nucleotide sequence ID" value="XM_045399701.2"/>
</dbReference>
<dbReference type="RefSeq" id="XP_045255637.1">
    <property type="nucleotide sequence ID" value="XM_045399702.2"/>
</dbReference>
<dbReference type="RefSeq" id="XP_045255638.1">
    <property type="nucleotide sequence ID" value="XM_045399703.2"/>
</dbReference>
<dbReference type="SMR" id="Q9BH05"/>
<dbReference type="Ensembl" id="ENSMFAT00000077670.1">
    <property type="protein sequence ID" value="ENSMFAP00000051426.1"/>
    <property type="gene ID" value="ENSMFAG00000064275.1"/>
</dbReference>
<dbReference type="Ensembl" id="ENSMFAT00000085006.1">
    <property type="protein sequence ID" value="ENSMFAP00000061334.1"/>
    <property type="gene ID" value="ENSMFAG00000064275.1"/>
</dbReference>
<dbReference type="GeneID" id="123575533"/>
<dbReference type="GeneTree" id="ENSGT00940000161144"/>
<dbReference type="Proteomes" id="UP000233100">
    <property type="component" value="Chromosome 9"/>
</dbReference>
<dbReference type="GO" id="GO:0005737">
    <property type="term" value="C:cytoplasm"/>
    <property type="evidence" value="ECO:0007669"/>
    <property type="project" value="TreeGrafter"/>
</dbReference>
<dbReference type="CDD" id="cd00464">
    <property type="entry name" value="SK"/>
    <property type="match status" value="1"/>
</dbReference>
<dbReference type="CDD" id="cd01560">
    <property type="entry name" value="Thr-synth_2"/>
    <property type="match status" value="1"/>
</dbReference>
<dbReference type="Gene3D" id="3.40.50.1100">
    <property type="match status" value="2"/>
</dbReference>
<dbReference type="Gene3D" id="3.40.50.300">
    <property type="entry name" value="P-loop containing nucleotide triphosphate hydrolases"/>
    <property type="match status" value="1"/>
</dbReference>
<dbReference type="Gene3D" id="3.90.1380.10">
    <property type="entry name" value="Threonine synthase, N-terminal domain"/>
    <property type="match status" value="1"/>
</dbReference>
<dbReference type="HAMAP" id="MF_00109">
    <property type="entry name" value="Shikimate_kinase"/>
    <property type="match status" value="1"/>
</dbReference>
<dbReference type="InterPro" id="IPR027417">
    <property type="entry name" value="P-loop_NTPase"/>
</dbReference>
<dbReference type="InterPro" id="IPR031322">
    <property type="entry name" value="Shikimate/glucono_kinase"/>
</dbReference>
<dbReference type="InterPro" id="IPR000623">
    <property type="entry name" value="Shikimate_kinase/TSH1"/>
</dbReference>
<dbReference type="InterPro" id="IPR029144">
    <property type="entry name" value="Thr_synth_N"/>
</dbReference>
<dbReference type="InterPro" id="IPR037158">
    <property type="entry name" value="Thr_synth_N_sf"/>
</dbReference>
<dbReference type="InterPro" id="IPR004450">
    <property type="entry name" value="Thr_synthase-like"/>
</dbReference>
<dbReference type="InterPro" id="IPR036052">
    <property type="entry name" value="TrpB-like_PALP_sf"/>
</dbReference>
<dbReference type="NCBIfam" id="TIGR00260">
    <property type="entry name" value="thrC"/>
    <property type="match status" value="1"/>
</dbReference>
<dbReference type="PANTHER" id="PTHR43515">
    <property type="entry name" value="THREONINE SYNTHASE-LIKE 1"/>
    <property type="match status" value="1"/>
</dbReference>
<dbReference type="PANTHER" id="PTHR43515:SF1">
    <property type="entry name" value="THREONINE SYNTHASE-LIKE 1"/>
    <property type="match status" value="1"/>
</dbReference>
<dbReference type="Pfam" id="PF01202">
    <property type="entry name" value="SKI"/>
    <property type="match status" value="1"/>
</dbReference>
<dbReference type="Pfam" id="PF14821">
    <property type="entry name" value="Thr_synth_N"/>
    <property type="match status" value="1"/>
</dbReference>
<dbReference type="PRINTS" id="PR01100">
    <property type="entry name" value="SHIKIMTKNASE"/>
</dbReference>
<dbReference type="SUPFAM" id="SSF52540">
    <property type="entry name" value="P-loop containing nucleoside triphosphate hydrolases"/>
    <property type="match status" value="1"/>
</dbReference>
<dbReference type="SUPFAM" id="SSF53686">
    <property type="entry name" value="Tryptophan synthase beta subunit-like PLP-dependent enzymes"/>
    <property type="match status" value="1"/>
</dbReference>
<protein>
    <recommendedName>
        <fullName>Threonine synthase-like 1</fullName>
        <shortName>TSH1</shortName>
    </recommendedName>
</protein>
<keyword id="KW-0007">Acetylation</keyword>
<keyword id="KW-0663">Pyridoxal phosphate</keyword>
<keyword id="KW-1185">Reference proteome</keyword>
<evidence type="ECO:0000250" key="1"/>
<evidence type="ECO:0000250" key="2">
    <source>
        <dbReference type="UniProtKB" id="Q8IYQ7"/>
    </source>
</evidence>
<evidence type="ECO:0000305" key="3"/>
<organism>
    <name type="scientific">Macaca fascicularis</name>
    <name type="common">Crab-eating macaque</name>
    <name type="synonym">Cynomolgus monkey</name>
    <dbReference type="NCBI Taxonomy" id="9541"/>
    <lineage>
        <taxon>Eukaryota</taxon>
        <taxon>Metazoa</taxon>
        <taxon>Chordata</taxon>
        <taxon>Craniata</taxon>
        <taxon>Vertebrata</taxon>
        <taxon>Euteleostomi</taxon>
        <taxon>Mammalia</taxon>
        <taxon>Eutheria</taxon>
        <taxon>Euarchontoglires</taxon>
        <taxon>Primates</taxon>
        <taxon>Haplorrhini</taxon>
        <taxon>Catarrhini</taxon>
        <taxon>Cercopithecidae</taxon>
        <taxon>Cercopithecinae</taxon>
        <taxon>Macaca</taxon>
    </lineage>
</organism>